<protein>
    <recommendedName>
        <fullName>Carbamoylase-1</fullName>
        <ecNumber>3.-.-.-</ecNumber>
    </recommendedName>
    <alternativeName>
        <fullName>Carbamoylase I</fullName>
    </alternativeName>
</protein>
<keyword id="KW-0903">Direct protein sequencing</keyword>
<keyword id="KW-0325">Glycoprotein</keyword>
<keyword id="KW-0378">Hydrolase</keyword>
<dbReference type="EC" id="3.-.-.-"/>
<dbReference type="GO" id="GO:0016788">
    <property type="term" value="F:hydrolase activity, acting on ester bonds"/>
    <property type="evidence" value="ECO:0000314"/>
    <property type="project" value="UniProtKB"/>
</dbReference>
<dbReference type="GO" id="GO:0009403">
    <property type="term" value="P:toxin biosynthetic process"/>
    <property type="evidence" value="ECO:0000314"/>
    <property type="project" value="UniProtKB"/>
</dbReference>
<reference evidence="3" key="1">
    <citation type="journal article" date="2004" name="Toxicon">
        <title>Purification and characterization of paralytic shellfish toxin transforming enzyme from Mactra chinensis.</title>
        <authorList>
            <person name="Lin H.-P."/>
            <person name="Cho Y."/>
            <person name="Yashiro H."/>
            <person name="Yamada T."/>
            <person name="Oshima Y."/>
        </authorList>
    </citation>
    <scope>PROTEIN SEQUENCE</scope>
    <scope>FUNCTION</scope>
    <scope>BIOPHYSICOCHEMICAL PROPERTIES</scope>
    <scope>SUBUNIT</scope>
    <scope>TISSUE SPECIFICITY</scope>
    <source>
        <tissue evidence="1">Digestive gland</tissue>
    </source>
</reference>
<accession>P84783</accession>
<evidence type="ECO:0000269" key="1">
    <source>
    </source>
</evidence>
<evidence type="ECO:0000303" key="2">
    <source>
    </source>
</evidence>
<evidence type="ECO:0000305" key="3"/>
<proteinExistence type="evidence at protein level"/>
<sequence>VRTPVTVQTKVDNIKXY</sequence>
<organism>
    <name type="scientific">Mactra chinensis</name>
    <name type="common">Chinese surf clam</name>
    <dbReference type="NCBI Taxonomy" id="339787"/>
    <lineage>
        <taxon>Eukaryota</taxon>
        <taxon>Metazoa</taxon>
        <taxon>Spiralia</taxon>
        <taxon>Lophotrochozoa</taxon>
        <taxon>Mollusca</taxon>
        <taxon>Bivalvia</taxon>
        <taxon>Autobranchia</taxon>
        <taxon>Heteroconchia</taxon>
        <taxon>Euheterodonta</taxon>
        <taxon>Imparidentia</taxon>
        <taxon>Neoheterodontei</taxon>
        <taxon>Venerida</taxon>
        <taxon>Mactroidea</taxon>
        <taxon>Mactridae</taxon>
        <taxon>Mactra</taxon>
    </lineage>
</organism>
<comment type="function">
    <text evidence="1">Hydrolysis of carbamoyl and sulfocarbamoyl esters of paralytic shellfish toxins. Ester hydrolysis is unaffected by the presence or absence of a hydroxyl moiety at the N-1 postion of the substrate toxin but is significantly affected by the stereochemistry of sulfate esters at C-11 of the substrate toxin.</text>
</comment>
<comment type="activity regulation">
    <text evidence="1">Strongly inhibited by the serine proteinase inhibitors BSF and AEBSF. Weakly inhibited by the proteinase inhibitors bestatin and E-64, and by the serine proteinase inhibitor leupeptin. Not inhibited by EDTA or by the proteinase inhibitor aprotinin.</text>
</comment>
<comment type="biophysicochemical properties">
    <kinetics>
        <KM evidence="1">3.02 uM for saxitoxin</KM>
        <Vmax evidence="1">40.1 pmol/min/ug enzyme</Vmax>
    </kinetics>
    <phDependence>
        <text evidence="1">Optimum pH is 7.0. Activity decreases sharply with increasing acidity or alkalinity.</text>
    </phDependence>
    <temperatureDependence>
        <text evidence="1">Optimum temperature is 20 degrees Celsius and activity decreases sharply above 40 degrees Celsius.</text>
    </temperatureDependence>
</comment>
<comment type="subunit">
    <text evidence="1">Homodimer.</text>
</comment>
<comment type="tissue specificity">
    <text evidence="1">Ubiquitous (at protein level). Highest levels of expression in digestive gland and crystalline style.</text>
</comment>
<comment type="PTM">
    <text evidence="1">Glycosylated.</text>
</comment>
<feature type="chain" id="PRO_0000227530" description="Carbamoylase-1">
    <location>
        <begin position="1"/>
        <end position="17" status="greater than"/>
    </location>
</feature>
<feature type="unsure residue" description="D or G" evidence="1">
    <location>
        <position position="12"/>
    </location>
</feature>
<feature type="unsure residue" description="I or V" evidence="1">
    <location>
        <position position="14"/>
    </location>
</feature>
<feature type="non-terminal residue" evidence="2">
    <location>
        <position position="17"/>
    </location>
</feature>
<name>CABM1_MACCH</name>